<gene>
    <name evidence="1" type="primary">ribH</name>
    <name type="synonym">ribE</name>
    <name type="ordered locus">BH07580</name>
</gene>
<proteinExistence type="inferred from homology"/>
<name>RISB_BARHE</name>
<keyword id="KW-0686">Riboflavin biosynthesis</keyword>
<keyword id="KW-0808">Transferase</keyword>
<sequence>MTIEICKKLHVLIVEARFYDGISDALLTGAVSTLQKAEATYDIVTVPGALEIPGAIAFAEKNSKIYYDGYVALGCVIRGETYHFEIVANDSCRALMDLTIHKHLAIGNGILTVENEKQAWARAKQDEKNKGGFAAQAALCMIALKKRFGEIIKYG</sequence>
<organism>
    <name type="scientific">Bartonella henselae (strain ATCC 49882 / DSM 28221 / CCUG 30454 / Houston 1)</name>
    <name type="common">Rochalimaea henselae</name>
    <dbReference type="NCBI Taxonomy" id="283166"/>
    <lineage>
        <taxon>Bacteria</taxon>
        <taxon>Pseudomonadati</taxon>
        <taxon>Pseudomonadota</taxon>
        <taxon>Alphaproteobacteria</taxon>
        <taxon>Hyphomicrobiales</taxon>
        <taxon>Bartonellaceae</taxon>
        <taxon>Bartonella</taxon>
    </lineage>
</organism>
<accession>Q9REF4</accession>
<accession>Q6G3K9</accession>
<protein>
    <recommendedName>
        <fullName evidence="1">6,7-dimethyl-8-ribityllumazine synthase</fullName>
        <shortName evidence="1">DMRL synthase</shortName>
        <shortName evidence="1">LS</shortName>
        <shortName evidence="1">Lumazine synthase</shortName>
        <ecNumber evidence="1">2.5.1.78</ecNumber>
    </recommendedName>
</protein>
<reference key="1">
    <citation type="journal article" date="1999" name="J. Clin. Microbiol.">
        <title>Molecular analysis of riboflavin synthesis genes in Bartonella henselae and use of the ribC gene for differentiation of Bartonella species by PCR.</title>
        <authorList>
            <person name="Bereswill S."/>
            <person name="Hinkelmann S."/>
            <person name="Kist M."/>
            <person name="Sander A."/>
        </authorList>
    </citation>
    <scope>NUCLEOTIDE SEQUENCE [GENOMIC DNA]</scope>
    <source>
        <strain>ATCC 49882 / DSM 28221 / CCUG 30454 / Houston 1</strain>
    </source>
</reference>
<reference key="2">
    <citation type="journal article" date="2004" name="Proc. Natl. Acad. Sci. U.S.A.">
        <title>The louse-borne human pathogen Bartonella quintana is a genomic derivative of the zoonotic agent Bartonella henselae.</title>
        <authorList>
            <person name="Alsmark U.C.M."/>
            <person name="Frank A.C."/>
            <person name="Karlberg E.O."/>
            <person name="Legault B.-A."/>
            <person name="Ardell D.H."/>
            <person name="Canbaeck B."/>
            <person name="Eriksson A.-S."/>
            <person name="Naeslund A.K."/>
            <person name="Handley S.A."/>
            <person name="Huvet M."/>
            <person name="La Scola B."/>
            <person name="Holmberg M."/>
            <person name="Andersson S.G.E."/>
        </authorList>
    </citation>
    <scope>NUCLEOTIDE SEQUENCE [LARGE SCALE GENOMIC DNA]</scope>
    <source>
        <strain>ATCC 49882 / DSM 28221 / CCUG 30454 / Houston 1</strain>
    </source>
</reference>
<evidence type="ECO:0000255" key="1">
    <source>
        <dbReference type="HAMAP-Rule" id="MF_00178"/>
    </source>
</evidence>
<evidence type="ECO:0000305" key="2"/>
<feature type="chain" id="PRO_0000134717" description="6,7-dimethyl-8-ribityllumazine synthase">
    <location>
        <begin position="1"/>
        <end position="155"/>
    </location>
</feature>
<feature type="active site" description="Proton donor" evidence="1">
    <location>
        <position position="83"/>
    </location>
</feature>
<feature type="binding site" evidence="1">
    <location>
        <position position="18"/>
    </location>
    <ligand>
        <name>5-amino-6-(D-ribitylamino)uracil</name>
        <dbReference type="ChEBI" id="CHEBI:15934"/>
    </ligand>
</feature>
<feature type="binding site" evidence="1">
    <location>
        <begin position="49"/>
        <end position="51"/>
    </location>
    <ligand>
        <name>5-amino-6-(D-ribitylamino)uracil</name>
        <dbReference type="ChEBI" id="CHEBI:15934"/>
    </ligand>
</feature>
<feature type="binding site" evidence="1">
    <location>
        <begin position="75"/>
        <end position="77"/>
    </location>
    <ligand>
        <name>5-amino-6-(D-ribitylamino)uracil</name>
        <dbReference type="ChEBI" id="CHEBI:15934"/>
    </ligand>
</feature>
<feature type="binding site" evidence="1">
    <location>
        <begin position="80"/>
        <end position="81"/>
    </location>
    <ligand>
        <name>(2S)-2-hydroxy-3-oxobutyl phosphate</name>
        <dbReference type="ChEBI" id="CHEBI:58830"/>
    </ligand>
</feature>
<feature type="binding site" evidence="1">
    <location>
        <position position="108"/>
    </location>
    <ligand>
        <name>5-amino-6-(D-ribitylamino)uracil</name>
        <dbReference type="ChEBI" id="CHEBI:15934"/>
    </ligand>
</feature>
<feature type="binding site" evidence="1">
    <location>
        <position position="122"/>
    </location>
    <ligand>
        <name>(2S)-2-hydroxy-3-oxobutyl phosphate</name>
        <dbReference type="ChEBI" id="CHEBI:58830"/>
    </ligand>
</feature>
<feature type="sequence conflict" description="In Ref. 1; CAB63092." evidence="2" ref="1">
    <original>L</original>
    <variation>S</variation>
    <location>
        <position position="95"/>
    </location>
</feature>
<feature type="sequence conflict" description="In Ref. 1; CAB63092." evidence="2" ref="1">
    <original>D</original>
    <variation>A</variation>
    <location>
        <position position="126"/>
    </location>
</feature>
<comment type="function">
    <text evidence="1">Catalyzes the formation of 6,7-dimethyl-8-ribityllumazine by condensation of 5-amino-6-(D-ribitylamino)uracil with 3,4-dihydroxy-2-butanone 4-phosphate. This is the penultimate step in the biosynthesis of riboflavin.</text>
</comment>
<comment type="catalytic activity">
    <reaction evidence="1">
        <text>(2S)-2-hydroxy-3-oxobutyl phosphate + 5-amino-6-(D-ribitylamino)uracil = 6,7-dimethyl-8-(1-D-ribityl)lumazine + phosphate + 2 H2O + H(+)</text>
        <dbReference type="Rhea" id="RHEA:26152"/>
        <dbReference type="ChEBI" id="CHEBI:15377"/>
        <dbReference type="ChEBI" id="CHEBI:15378"/>
        <dbReference type="ChEBI" id="CHEBI:15934"/>
        <dbReference type="ChEBI" id="CHEBI:43474"/>
        <dbReference type="ChEBI" id="CHEBI:58201"/>
        <dbReference type="ChEBI" id="CHEBI:58830"/>
        <dbReference type="EC" id="2.5.1.78"/>
    </reaction>
</comment>
<comment type="pathway">
    <text evidence="1">Cofactor biosynthesis; riboflavin biosynthesis; riboflavin from 2-hydroxy-3-oxobutyl phosphate and 5-amino-6-(D-ribitylamino)uracil: step 1/2.</text>
</comment>
<comment type="similarity">
    <text evidence="1">Belongs to the DMRL synthase family.</text>
</comment>
<dbReference type="EC" id="2.5.1.78" evidence="1"/>
<dbReference type="EMBL" id="AJ132928">
    <property type="protein sequence ID" value="CAB63092.1"/>
    <property type="molecule type" value="Genomic_DNA"/>
</dbReference>
<dbReference type="EMBL" id="BX897699">
    <property type="protein sequence ID" value="CAF27559.1"/>
    <property type="molecule type" value="Genomic_DNA"/>
</dbReference>
<dbReference type="RefSeq" id="WP_011180660.1">
    <property type="nucleotide sequence ID" value="NZ_LRIJ02000001.1"/>
</dbReference>
<dbReference type="SMR" id="Q9REF4"/>
<dbReference type="PaxDb" id="283166-BH07580"/>
<dbReference type="EnsemblBacteria" id="CAF27559">
    <property type="protein sequence ID" value="CAF27559"/>
    <property type="gene ID" value="BH07580"/>
</dbReference>
<dbReference type="KEGG" id="bhe:BH07580"/>
<dbReference type="eggNOG" id="COG0054">
    <property type="taxonomic scope" value="Bacteria"/>
</dbReference>
<dbReference type="OrthoDB" id="9809709at2"/>
<dbReference type="BRENDA" id="2.5.1.78">
    <property type="organism ID" value="7854"/>
</dbReference>
<dbReference type="UniPathway" id="UPA00275">
    <property type="reaction ID" value="UER00404"/>
</dbReference>
<dbReference type="Proteomes" id="UP000000421">
    <property type="component" value="Chromosome"/>
</dbReference>
<dbReference type="GO" id="GO:0005829">
    <property type="term" value="C:cytosol"/>
    <property type="evidence" value="ECO:0007669"/>
    <property type="project" value="TreeGrafter"/>
</dbReference>
<dbReference type="GO" id="GO:0009349">
    <property type="term" value="C:riboflavin synthase complex"/>
    <property type="evidence" value="ECO:0007669"/>
    <property type="project" value="InterPro"/>
</dbReference>
<dbReference type="GO" id="GO:0000906">
    <property type="term" value="F:6,7-dimethyl-8-ribityllumazine synthase activity"/>
    <property type="evidence" value="ECO:0007669"/>
    <property type="project" value="UniProtKB-UniRule"/>
</dbReference>
<dbReference type="GO" id="GO:0009231">
    <property type="term" value="P:riboflavin biosynthetic process"/>
    <property type="evidence" value="ECO:0007669"/>
    <property type="project" value="UniProtKB-UniRule"/>
</dbReference>
<dbReference type="CDD" id="cd09209">
    <property type="entry name" value="Lumazine_synthase-I"/>
    <property type="match status" value="1"/>
</dbReference>
<dbReference type="Gene3D" id="3.40.50.960">
    <property type="entry name" value="Lumazine/riboflavin synthase"/>
    <property type="match status" value="1"/>
</dbReference>
<dbReference type="HAMAP" id="MF_00178">
    <property type="entry name" value="Lumazine_synth"/>
    <property type="match status" value="1"/>
</dbReference>
<dbReference type="InterPro" id="IPR034964">
    <property type="entry name" value="LS"/>
</dbReference>
<dbReference type="InterPro" id="IPR002180">
    <property type="entry name" value="LS/RS"/>
</dbReference>
<dbReference type="InterPro" id="IPR036467">
    <property type="entry name" value="LS/RS_sf"/>
</dbReference>
<dbReference type="NCBIfam" id="TIGR00114">
    <property type="entry name" value="lumazine-synth"/>
    <property type="match status" value="1"/>
</dbReference>
<dbReference type="NCBIfam" id="NF000814">
    <property type="entry name" value="PRK00061.2-2"/>
    <property type="match status" value="1"/>
</dbReference>
<dbReference type="PANTHER" id="PTHR21058:SF0">
    <property type="entry name" value="6,7-DIMETHYL-8-RIBITYLLUMAZINE SYNTHASE"/>
    <property type="match status" value="1"/>
</dbReference>
<dbReference type="PANTHER" id="PTHR21058">
    <property type="entry name" value="6,7-DIMETHYL-8-RIBITYLLUMAZINE SYNTHASE DMRL SYNTHASE LUMAZINE SYNTHASE"/>
    <property type="match status" value="1"/>
</dbReference>
<dbReference type="Pfam" id="PF00885">
    <property type="entry name" value="DMRL_synthase"/>
    <property type="match status" value="1"/>
</dbReference>
<dbReference type="SUPFAM" id="SSF52121">
    <property type="entry name" value="Lumazine synthase"/>
    <property type="match status" value="1"/>
</dbReference>